<name>MIAB_THET2</name>
<dbReference type="EC" id="2.8.4.3" evidence="1"/>
<dbReference type="EMBL" id="AE017221">
    <property type="protein sequence ID" value="AAS81284.1"/>
    <property type="molecule type" value="Genomic_DNA"/>
</dbReference>
<dbReference type="SMR" id="Q72J39"/>
<dbReference type="KEGG" id="tth:TT_C0942"/>
<dbReference type="eggNOG" id="COG0621">
    <property type="taxonomic scope" value="Bacteria"/>
</dbReference>
<dbReference type="HOGENOM" id="CLU_018697_2_0_0"/>
<dbReference type="Proteomes" id="UP000000592">
    <property type="component" value="Chromosome"/>
</dbReference>
<dbReference type="GO" id="GO:0005829">
    <property type="term" value="C:cytosol"/>
    <property type="evidence" value="ECO:0007669"/>
    <property type="project" value="TreeGrafter"/>
</dbReference>
<dbReference type="GO" id="GO:0051539">
    <property type="term" value="F:4 iron, 4 sulfur cluster binding"/>
    <property type="evidence" value="ECO:0007669"/>
    <property type="project" value="UniProtKB-UniRule"/>
</dbReference>
<dbReference type="GO" id="GO:0046872">
    <property type="term" value="F:metal ion binding"/>
    <property type="evidence" value="ECO:0007669"/>
    <property type="project" value="UniProtKB-KW"/>
</dbReference>
<dbReference type="GO" id="GO:0035597">
    <property type="term" value="F:N6-isopentenyladenosine methylthiotransferase activity"/>
    <property type="evidence" value="ECO:0007669"/>
    <property type="project" value="TreeGrafter"/>
</dbReference>
<dbReference type="CDD" id="cd01335">
    <property type="entry name" value="Radical_SAM"/>
    <property type="match status" value="1"/>
</dbReference>
<dbReference type="FunFam" id="3.40.50.12160:FF:000003">
    <property type="entry name" value="CDK5 regulatory subunit-associated protein 1"/>
    <property type="match status" value="1"/>
</dbReference>
<dbReference type="FunFam" id="3.80.30.20:FF:000001">
    <property type="entry name" value="tRNA-2-methylthio-N(6)-dimethylallyladenosine synthase 2"/>
    <property type="match status" value="1"/>
</dbReference>
<dbReference type="Gene3D" id="3.40.50.12160">
    <property type="entry name" value="Methylthiotransferase, N-terminal domain"/>
    <property type="match status" value="1"/>
</dbReference>
<dbReference type="Gene3D" id="3.80.30.20">
    <property type="entry name" value="tm_1862 like domain"/>
    <property type="match status" value="1"/>
</dbReference>
<dbReference type="HAMAP" id="MF_01864">
    <property type="entry name" value="tRNA_metthiotr_MiaB"/>
    <property type="match status" value="1"/>
</dbReference>
<dbReference type="InterPro" id="IPR006638">
    <property type="entry name" value="Elp3/MiaA/NifB-like_rSAM"/>
</dbReference>
<dbReference type="InterPro" id="IPR005839">
    <property type="entry name" value="Methylthiotransferase"/>
</dbReference>
<dbReference type="InterPro" id="IPR020612">
    <property type="entry name" value="Methylthiotransferase_CS"/>
</dbReference>
<dbReference type="InterPro" id="IPR013848">
    <property type="entry name" value="Methylthiotransferase_N"/>
</dbReference>
<dbReference type="InterPro" id="IPR038135">
    <property type="entry name" value="Methylthiotransferase_N_sf"/>
</dbReference>
<dbReference type="InterPro" id="IPR006463">
    <property type="entry name" value="MiaB_methiolase"/>
</dbReference>
<dbReference type="InterPro" id="IPR007197">
    <property type="entry name" value="rSAM"/>
</dbReference>
<dbReference type="InterPro" id="IPR023404">
    <property type="entry name" value="rSAM_horseshoe"/>
</dbReference>
<dbReference type="InterPro" id="IPR002792">
    <property type="entry name" value="TRAM_dom"/>
</dbReference>
<dbReference type="NCBIfam" id="TIGR01574">
    <property type="entry name" value="miaB-methiolase"/>
    <property type="match status" value="1"/>
</dbReference>
<dbReference type="NCBIfam" id="TIGR00089">
    <property type="entry name" value="MiaB/RimO family radical SAM methylthiotransferase"/>
    <property type="match status" value="1"/>
</dbReference>
<dbReference type="PANTHER" id="PTHR43020">
    <property type="entry name" value="CDK5 REGULATORY SUBUNIT-ASSOCIATED PROTEIN 1"/>
    <property type="match status" value="1"/>
</dbReference>
<dbReference type="PANTHER" id="PTHR43020:SF2">
    <property type="entry name" value="MITOCHONDRIAL TRNA METHYLTHIOTRANSFERASE CDK5RAP1"/>
    <property type="match status" value="1"/>
</dbReference>
<dbReference type="Pfam" id="PF04055">
    <property type="entry name" value="Radical_SAM"/>
    <property type="match status" value="1"/>
</dbReference>
<dbReference type="Pfam" id="PF01938">
    <property type="entry name" value="TRAM"/>
    <property type="match status" value="1"/>
</dbReference>
<dbReference type="Pfam" id="PF00919">
    <property type="entry name" value="UPF0004"/>
    <property type="match status" value="1"/>
</dbReference>
<dbReference type="SFLD" id="SFLDF00273">
    <property type="entry name" value="(dimethylallyl)adenosine_tRNA"/>
    <property type="match status" value="1"/>
</dbReference>
<dbReference type="SFLD" id="SFLDG01082">
    <property type="entry name" value="B12-binding_domain_containing"/>
    <property type="match status" value="1"/>
</dbReference>
<dbReference type="SFLD" id="SFLDG01061">
    <property type="entry name" value="methylthiotransferase"/>
    <property type="match status" value="1"/>
</dbReference>
<dbReference type="SMART" id="SM00729">
    <property type="entry name" value="Elp3"/>
    <property type="match status" value="1"/>
</dbReference>
<dbReference type="SUPFAM" id="SSF102114">
    <property type="entry name" value="Radical SAM enzymes"/>
    <property type="match status" value="1"/>
</dbReference>
<dbReference type="PROSITE" id="PS51449">
    <property type="entry name" value="MTTASE_N"/>
    <property type="match status" value="1"/>
</dbReference>
<dbReference type="PROSITE" id="PS01278">
    <property type="entry name" value="MTTASE_RADICAL"/>
    <property type="match status" value="1"/>
</dbReference>
<dbReference type="PROSITE" id="PS51918">
    <property type="entry name" value="RADICAL_SAM"/>
    <property type="match status" value="1"/>
</dbReference>
<dbReference type="PROSITE" id="PS50926">
    <property type="entry name" value="TRAM"/>
    <property type="match status" value="1"/>
</dbReference>
<sequence>MPPCYPFLLSWEGWARDPPGRPGGAMRAHIITYGCQMNEYDSHLVASELVSLGWELVDSVEEADFVLVNTCAVRGKPVEKVRSLLGQLRKEKERRGLLIGMMGCLAQLDEGQQMAKKFGVDVLLGPGALTSLPEALKANERFFDLTFREDVLDYIPPPPKGALSAHVTIIRGCNHHCTYCIVPTTRGPEVSRHPDLILKEIELLKQAGVVEVTLLGQNVNSYGKDQPGFPSFAELLRMVGGMGIPRVRFLTSHPVNFTDDIIEAIAETPAICRYIHLPVQSGSDRVLRRMAREYRRAHYLERIRKIREALPDAVLSTDIIVGFPGETEEDFQETLSLYDEVGYDQAYMFIYSPRPGTPAYKHFQDLPREVKVERLMRLIEKQKEWSYRRNLEWVGKTVEVLVRGEAKEEGFVQGHDRGNHPVLVPASQAPVPGLYQVEIKQATPHLLFGEVVGAEAPAPIPLPVA</sequence>
<evidence type="ECO:0000255" key="1">
    <source>
        <dbReference type="HAMAP-Rule" id="MF_01864"/>
    </source>
</evidence>
<evidence type="ECO:0000255" key="2">
    <source>
        <dbReference type="PROSITE-ProRule" id="PRU01266"/>
    </source>
</evidence>
<comment type="function">
    <text evidence="1">Catalyzes the methylthiolation of N6-(dimethylallyl)adenosine (i(6)A), leading to the formation of 2-methylthio-N6-(dimethylallyl)adenosine (ms(2)i(6)A) at position 37 in tRNAs that read codons beginning with uridine.</text>
</comment>
<comment type="catalytic activity">
    <reaction evidence="1">
        <text>N(6)-dimethylallyladenosine(37) in tRNA + (sulfur carrier)-SH + AH2 + 2 S-adenosyl-L-methionine = 2-methylsulfanyl-N(6)-dimethylallyladenosine(37) in tRNA + (sulfur carrier)-H + 5'-deoxyadenosine + L-methionine + A + S-adenosyl-L-homocysteine + 2 H(+)</text>
        <dbReference type="Rhea" id="RHEA:37067"/>
        <dbReference type="Rhea" id="RHEA-COMP:10375"/>
        <dbReference type="Rhea" id="RHEA-COMP:10376"/>
        <dbReference type="Rhea" id="RHEA-COMP:14737"/>
        <dbReference type="Rhea" id="RHEA-COMP:14739"/>
        <dbReference type="ChEBI" id="CHEBI:13193"/>
        <dbReference type="ChEBI" id="CHEBI:15378"/>
        <dbReference type="ChEBI" id="CHEBI:17319"/>
        <dbReference type="ChEBI" id="CHEBI:17499"/>
        <dbReference type="ChEBI" id="CHEBI:29917"/>
        <dbReference type="ChEBI" id="CHEBI:57844"/>
        <dbReference type="ChEBI" id="CHEBI:57856"/>
        <dbReference type="ChEBI" id="CHEBI:59789"/>
        <dbReference type="ChEBI" id="CHEBI:64428"/>
        <dbReference type="ChEBI" id="CHEBI:74415"/>
        <dbReference type="ChEBI" id="CHEBI:74417"/>
        <dbReference type="EC" id="2.8.4.3"/>
    </reaction>
</comment>
<comment type="cofactor">
    <cofactor evidence="1">
        <name>[4Fe-4S] cluster</name>
        <dbReference type="ChEBI" id="CHEBI:49883"/>
    </cofactor>
    <text evidence="1">Binds 2 [4Fe-4S] clusters. One cluster is coordinated with 3 cysteines and an exchangeable S-adenosyl-L-methionine.</text>
</comment>
<comment type="subunit">
    <text evidence="1">Monomer.</text>
</comment>
<comment type="subcellular location">
    <subcellularLocation>
        <location evidence="1">Cytoplasm</location>
    </subcellularLocation>
</comment>
<comment type="similarity">
    <text evidence="1">Belongs to the methylthiotransferase family. MiaB subfamily.</text>
</comment>
<feature type="chain" id="PRO_0000374617" description="tRNA-2-methylthio-N(6)-dimethylallyladenosine synthase">
    <location>
        <begin position="1"/>
        <end position="465"/>
    </location>
</feature>
<feature type="domain" description="MTTase N-terminal" evidence="1">
    <location>
        <begin position="26"/>
        <end position="141"/>
    </location>
</feature>
<feature type="domain" description="Radical SAM core" evidence="2">
    <location>
        <begin position="159"/>
        <end position="388"/>
    </location>
</feature>
<feature type="domain" description="TRAM" evidence="1">
    <location>
        <begin position="391"/>
        <end position="453"/>
    </location>
</feature>
<feature type="binding site" evidence="1">
    <location>
        <position position="35"/>
    </location>
    <ligand>
        <name>[4Fe-4S] cluster</name>
        <dbReference type="ChEBI" id="CHEBI:49883"/>
        <label>1</label>
    </ligand>
</feature>
<feature type="binding site" evidence="1">
    <location>
        <position position="71"/>
    </location>
    <ligand>
        <name>[4Fe-4S] cluster</name>
        <dbReference type="ChEBI" id="CHEBI:49883"/>
        <label>1</label>
    </ligand>
</feature>
<feature type="binding site" evidence="1">
    <location>
        <position position="104"/>
    </location>
    <ligand>
        <name>[4Fe-4S] cluster</name>
        <dbReference type="ChEBI" id="CHEBI:49883"/>
        <label>1</label>
    </ligand>
</feature>
<feature type="binding site" evidence="1">
    <location>
        <position position="173"/>
    </location>
    <ligand>
        <name>[4Fe-4S] cluster</name>
        <dbReference type="ChEBI" id="CHEBI:49883"/>
        <label>2</label>
        <note>4Fe-4S-S-AdoMet</note>
    </ligand>
</feature>
<feature type="binding site" evidence="1">
    <location>
        <position position="177"/>
    </location>
    <ligand>
        <name>[4Fe-4S] cluster</name>
        <dbReference type="ChEBI" id="CHEBI:49883"/>
        <label>2</label>
        <note>4Fe-4S-S-AdoMet</note>
    </ligand>
</feature>
<feature type="binding site" evidence="1">
    <location>
        <position position="180"/>
    </location>
    <ligand>
        <name>[4Fe-4S] cluster</name>
        <dbReference type="ChEBI" id="CHEBI:49883"/>
        <label>2</label>
        <note>4Fe-4S-S-AdoMet</note>
    </ligand>
</feature>
<protein>
    <recommendedName>
        <fullName evidence="1">tRNA-2-methylthio-N(6)-dimethylallyladenosine synthase</fullName>
        <ecNumber evidence="1">2.8.4.3</ecNumber>
    </recommendedName>
    <alternativeName>
        <fullName evidence="1">(Dimethylallyl)adenosine tRNA methylthiotransferase MiaB</fullName>
    </alternativeName>
    <alternativeName>
        <fullName evidence="1">tRNA-i(6)A37 methylthiotransferase</fullName>
    </alternativeName>
</protein>
<keyword id="KW-0004">4Fe-4S</keyword>
<keyword id="KW-0963">Cytoplasm</keyword>
<keyword id="KW-0408">Iron</keyword>
<keyword id="KW-0411">Iron-sulfur</keyword>
<keyword id="KW-0479">Metal-binding</keyword>
<keyword id="KW-0949">S-adenosyl-L-methionine</keyword>
<keyword id="KW-0808">Transferase</keyword>
<keyword id="KW-0819">tRNA processing</keyword>
<organism>
    <name type="scientific">Thermus thermophilus (strain ATCC BAA-163 / DSM 7039 / HB27)</name>
    <dbReference type="NCBI Taxonomy" id="262724"/>
    <lineage>
        <taxon>Bacteria</taxon>
        <taxon>Thermotogati</taxon>
        <taxon>Deinococcota</taxon>
        <taxon>Deinococci</taxon>
        <taxon>Thermales</taxon>
        <taxon>Thermaceae</taxon>
        <taxon>Thermus</taxon>
    </lineage>
</organism>
<proteinExistence type="inferred from homology"/>
<reference key="1">
    <citation type="journal article" date="2004" name="Nat. Biotechnol.">
        <title>The genome sequence of the extreme thermophile Thermus thermophilus.</title>
        <authorList>
            <person name="Henne A."/>
            <person name="Brueggemann H."/>
            <person name="Raasch C."/>
            <person name="Wiezer A."/>
            <person name="Hartsch T."/>
            <person name="Liesegang H."/>
            <person name="Johann A."/>
            <person name="Lienard T."/>
            <person name="Gohl O."/>
            <person name="Martinez-Arias R."/>
            <person name="Jacobi C."/>
            <person name="Starkuviene V."/>
            <person name="Schlenczeck S."/>
            <person name="Dencker S."/>
            <person name="Huber R."/>
            <person name="Klenk H.-P."/>
            <person name="Kramer W."/>
            <person name="Merkl R."/>
            <person name="Gottschalk G."/>
            <person name="Fritz H.-J."/>
        </authorList>
    </citation>
    <scope>NUCLEOTIDE SEQUENCE [LARGE SCALE GENOMIC DNA]</scope>
    <source>
        <strain>ATCC BAA-163 / DSM 7039 / HB27</strain>
    </source>
</reference>
<accession>Q72J39</accession>
<gene>
    <name evidence="1" type="primary">miaB</name>
    <name type="ordered locus">TT_C0942</name>
</gene>